<sequence>MNLHEYQGKQLFAEYGLPVSKGIAAETPAEAAAAADIIGGDKWVVKAQVHAGGRGKAGGVKLVSSKAEIEEFAKKWLGNNLITYQTDENGQPVSRILVESCTDIADELYLGAVVDRSTRRVIFMASTEGGVEIEKVAEETPEKILKAIIDPLTGAQPYQARELGFKLGLNPVQIKQFTQIFLGLAKMFVDKDLALLEINPLVITDEGNLHCLDAKVAIDGNAMYRQPALKEMHDPSQEDEREAHAAKWELNYVALDGNIGCMVNGAGLAMGTMDIVKLHGGQPANFLDVGGGATKERVVEAFKIILSDDNVKAVLINIFGGIVRCDLIAEGVIGAVEEVGVKVPVVVRLEGNNAELGAKVLADSGLNIIAAESLTDAAVQVVKAAEGK</sequence>
<dbReference type="EC" id="6.2.1.5" evidence="1"/>
<dbReference type="EMBL" id="CP000282">
    <property type="protein sequence ID" value="ABD81363.1"/>
    <property type="molecule type" value="Genomic_DNA"/>
</dbReference>
<dbReference type="RefSeq" id="WP_011468581.1">
    <property type="nucleotide sequence ID" value="NC_007912.1"/>
</dbReference>
<dbReference type="SMR" id="Q21IW6"/>
<dbReference type="STRING" id="203122.Sde_2103"/>
<dbReference type="GeneID" id="98613775"/>
<dbReference type="KEGG" id="sde:Sde_2103"/>
<dbReference type="eggNOG" id="COG0045">
    <property type="taxonomic scope" value="Bacteria"/>
</dbReference>
<dbReference type="HOGENOM" id="CLU_037430_0_2_6"/>
<dbReference type="OrthoDB" id="9802602at2"/>
<dbReference type="UniPathway" id="UPA00223">
    <property type="reaction ID" value="UER00999"/>
</dbReference>
<dbReference type="Proteomes" id="UP000001947">
    <property type="component" value="Chromosome"/>
</dbReference>
<dbReference type="GO" id="GO:0005829">
    <property type="term" value="C:cytosol"/>
    <property type="evidence" value="ECO:0007669"/>
    <property type="project" value="TreeGrafter"/>
</dbReference>
<dbReference type="GO" id="GO:0042709">
    <property type="term" value="C:succinate-CoA ligase complex"/>
    <property type="evidence" value="ECO:0007669"/>
    <property type="project" value="TreeGrafter"/>
</dbReference>
<dbReference type="GO" id="GO:0005524">
    <property type="term" value="F:ATP binding"/>
    <property type="evidence" value="ECO:0007669"/>
    <property type="project" value="UniProtKB-UniRule"/>
</dbReference>
<dbReference type="GO" id="GO:0000287">
    <property type="term" value="F:magnesium ion binding"/>
    <property type="evidence" value="ECO:0007669"/>
    <property type="project" value="UniProtKB-UniRule"/>
</dbReference>
<dbReference type="GO" id="GO:0004775">
    <property type="term" value="F:succinate-CoA ligase (ADP-forming) activity"/>
    <property type="evidence" value="ECO:0007669"/>
    <property type="project" value="UniProtKB-UniRule"/>
</dbReference>
<dbReference type="GO" id="GO:0004776">
    <property type="term" value="F:succinate-CoA ligase (GDP-forming) activity"/>
    <property type="evidence" value="ECO:0007669"/>
    <property type="project" value="RHEA"/>
</dbReference>
<dbReference type="GO" id="GO:0006104">
    <property type="term" value="P:succinyl-CoA metabolic process"/>
    <property type="evidence" value="ECO:0007669"/>
    <property type="project" value="TreeGrafter"/>
</dbReference>
<dbReference type="GO" id="GO:0006099">
    <property type="term" value="P:tricarboxylic acid cycle"/>
    <property type="evidence" value="ECO:0007669"/>
    <property type="project" value="UniProtKB-UniRule"/>
</dbReference>
<dbReference type="FunFam" id="3.30.1490.20:FF:000002">
    <property type="entry name" value="Succinate--CoA ligase [ADP-forming] subunit beta"/>
    <property type="match status" value="1"/>
</dbReference>
<dbReference type="FunFam" id="3.30.470.20:FF:000002">
    <property type="entry name" value="Succinate--CoA ligase [ADP-forming] subunit beta"/>
    <property type="match status" value="1"/>
</dbReference>
<dbReference type="FunFam" id="3.40.50.261:FF:000001">
    <property type="entry name" value="Succinate--CoA ligase [ADP-forming] subunit beta"/>
    <property type="match status" value="1"/>
</dbReference>
<dbReference type="Gene3D" id="3.30.1490.20">
    <property type="entry name" value="ATP-grasp fold, A domain"/>
    <property type="match status" value="1"/>
</dbReference>
<dbReference type="Gene3D" id="3.30.470.20">
    <property type="entry name" value="ATP-grasp fold, B domain"/>
    <property type="match status" value="1"/>
</dbReference>
<dbReference type="Gene3D" id="3.40.50.261">
    <property type="entry name" value="Succinyl-CoA synthetase domains"/>
    <property type="match status" value="1"/>
</dbReference>
<dbReference type="HAMAP" id="MF_00558">
    <property type="entry name" value="Succ_CoA_beta"/>
    <property type="match status" value="1"/>
</dbReference>
<dbReference type="InterPro" id="IPR011761">
    <property type="entry name" value="ATP-grasp"/>
</dbReference>
<dbReference type="InterPro" id="IPR013650">
    <property type="entry name" value="ATP-grasp_succ-CoA_synth-type"/>
</dbReference>
<dbReference type="InterPro" id="IPR013815">
    <property type="entry name" value="ATP_grasp_subdomain_1"/>
</dbReference>
<dbReference type="InterPro" id="IPR017866">
    <property type="entry name" value="Succ-CoA_synthase_bsu_CS"/>
</dbReference>
<dbReference type="InterPro" id="IPR005811">
    <property type="entry name" value="SUCC_ACL_C"/>
</dbReference>
<dbReference type="InterPro" id="IPR005809">
    <property type="entry name" value="Succ_CoA_ligase-like_bsu"/>
</dbReference>
<dbReference type="InterPro" id="IPR016102">
    <property type="entry name" value="Succinyl-CoA_synth-like"/>
</dbReference>
<dbReference type="NCBIfam" id="NF001913">
    <property type="entry name" value="PRK00696.1"/>
    <property type="match status" value="1"/>
</dbReference>
<dbReference type="NCBIfam" id="TIGR01016">
    <property type="entry name" value="sucCoAbeta"/>
    <property type="match status" value="1"/>
</dbReference>
<dbReference type="PANTHER" id="PTHR11815:SF10">
    <property type="entry name" value="SUCCINATE--COA LIGASE [GDP-FORMING] SUBUNIT BETA, MITOCHONDRIAL"/>
    <property type="match status" value="1"/>
</dbReference>
<dbReference type="PANTHER" id="PTHR11815">
    <property type="entry name" value="SUCCINYL-COA SYNTHETASE BETA CHAIN"/>
    <property type="match status" value="1"/>
</dbReference>
<dbReference type="Pfam" id="PF08442">
    <property type="entry name" value="ATP-grasp_2"/>
    <property type="match status" value="1"/>
</dbReference>
<dbReference type="Pfam" id="PF00549">
    <property type="entry name" value="Ligase_CoA"/>
    <property type="match status" value="1"/>
</dbReference>
<dbReference type="PIRSF" id="PIRSF001554">
    <property type="entry name" value="SucCS_beta"/>
    <property type="match status" value="1"/>
</dbReference>
<dbReference type="SUPFAM" id="SSF56059">
    <property type="entry name" value="Glutathione synthetase ATP-binding domain-like"/>
    <property type="match status" value="1"/>
</dbReference>
<dbReference type="SUPFAM" id="SSF52210">
    <property type="entry name" value="Succinyl-CoA synthetase domains"/>
    <property type="match status" value="1"/>
</dbReference>
<dbReference type="PROSITE" id="PS50975">
    <property type="entry name" value="ATP_GRASP"/>
    <property type="match status" value="1"/>
</dbReference>
<dbReference type="PROSITE" id="PS01217">
    <property type="entry name" value="SUCCINYL_COA_LIG_3"/>
    <property type="match status" value="1"/>
</dbReference>
<protein>
    <recommendedName>
        <fullName evidence="1">Succinate--CoA ligase [ADP-forming] subunit beta</fullName>
        <ecNumber evidence="1">6.2.1.5</ecNumber>
    </recommendedName>
    <alternativeName>
        <fullName evidence="1">Succinyl-CoA synthetase subunit beta</fullName>
        <shortName evidence="1">SCS-beta</shortName>
    </alternativeName>
</protein>
<feature type="chain" id="PRO_1000082209" description="Succinate--CoA ligase [ADP-forming] subunit beta">
    <location>
        <begin position="1"/>
        <end position="388"/>
    </location>
</feature>
<feature type="domain" description="ATP-grasp" evidence="1">
    <location>
        <begin position="9"/>
        <end position="244"/>
    </location>
</feature>
<feature type="binding site" evidence="1">
    <location>
        <position position="46"/>
    </location>
    <ligand>
        <name>ATP</name>
        <dbReference type="ChEBI" id="CHEBI:30616"/>
    </ligand>
</feature>
<feature type="binding site" evidence="1">
    <location>
        <begin position="53"/>
        <end position="55"/>
    </location>
    <ligand>
        <name>ATP</name>
        <dbReference type="ChEBI" id="CHEBI:30616"/>
    </ligand>
</feature>
<feature type="binding site" evidence="1">
    <location>
        <position position="99"/>
    </location>
    <ligand>
        <name>ATP</name>
        <dbReference type="ChEBI" id="CHEBI:30616"/>
    </ligand>
</feature>
<feature type="binding site" evidence="1">
    <location>
        <position position="102"/>
    </location>
    <ligand>
        <name>ATP</name>
        <dbReference type="ChEBI" id="CHEBI:30616"/>
    </ligand>
</feature>
<feature type="binding site" evidence="1">
    <location>
        <position position="107"/>
    </location>
    <ligand>
        <name>ATP</name>
        <dbReference type="ChEBI" id="CHEBI:30616"/>
    </ligand>
</feature>
<feature type="binding site" evidence="1">
    <location>
        <position position="199"/>
    </location>
    <ligand>
        <name>Mg(2+)</name>
        <dbReference type="ChEBI" id="CHEBI:18420"/>
    </ligand>
</feature>
<feature type="binding site" evidence="1">
    <location>
        <position position="213"/>
    </location>
    <ligand>
        <name>Mg(2+)</name>
        <dbReference type="ChEBI" id="CHEBI:18420"/>
    </ligand>
</feature>
<feature type="binding site" evidence="1">
    <location>
        <position position="264"/>
    </location>
    <ligand>
        <name>substrate</name>
        <note>ligand shared with subunit alpha</note>
    </ligand>
</feature>
<feature type="binding site" evidence="1">
    <location>
        <begin position="321"/>
        <end position="323"/>
    </location>
    <ligand>
        <name>substrate</name>
        <note>ligand shared with subunit alpha</note>
    </ligand>
</feature>
<name>SUCC_SACD2</name>
<gene>
    <name evidence="1" type="primary">sucC</name>
    <name type="ordered locus">Sde_2103</name>
</gene>
<proteinExistence type="inferred from homology"/>
<organism>
    <name type="scientific">Saccharophagus degradans (strain 2-40 / ATCC 43961 / DSM 17024)</name>
    <dbReference type="NCBI Taxonomy" id="203122"/>
    <lineage>
        <taxon>Bacteria</taxon>
        <taxon>Pseudomonadati</taxon>
        <taxon>Pseudomonadota</taxon>
        <taxon>Gammaproteobacteria</taxon>
        <taxon>Cellvibrionales</taxon>
        <taxon>Cellvibrionaceae</taxon>
        <taxon>Saccharophagus</taxon>
    </lineage>
</organism>
<accession>Q21IW6</accession>
<keyword id="KW-0067">ATP-binding</keyword>
<keyword id="KW-0436">Ligase</keyword>
<keyword id="KW-0460">Magnesium</keyword>
<keyword id="KW-0479">Metal-binding</keyword>
<keyword id="KW-0547">Nucleotide-binding</keyword>
<keyword id="KW-1185">Reference proteome</keyword>
<keyword id="KW-0816">Tricarboxylic acid cycle</keyword>
<reference key="1">
    <citation type="journal article" date="2008" name="PLoS Genet.">
        <title>Complete genome sequence of the complex carbohydrate-degrading marine bacterium, Saccharophagus degradans strain 2-40 T.</title>
        <authorList>
            <person name="Weiner R.M."/>
            <person name="Taylor L.E. II"/>
            <person name="Henrissat B."/>
            <person name="Hauser L."/>
            <person name="Land M."/>
            <person name="Coutinho P.M."/>
            <person name="Rancurel C."/>
            <person name="Saunders E.H."/>
            <person name="Longmire A.G."/>
            <person name="Zhang H."/>
            <person name="Bayer E.A."/>
            <person name="Gilbert H.J."/>
            <person name="Larimer F."/>
            <person name="Zhulin I.B."/>
            <person name="Ekborg N.A."/>
            <person name="Lamed R."/>
            <person name="Richardson P.M."/>
            <person name="Borovok I."/>
            <person name="Hutcheson S."/>
        </authorList>
    </citation>
    <scope>NUCLEOTIDE SEQUENCE [LARGE SCALE GENOMIC DNA]</scope>
    <source>
        <strain>2-40 / ATCC 43961 / DSM 17024</strain>
    </source>
</reference>
<comment type="function">
    <text evidence="1">Succinyl-CoA synthetase functions in the citric acid cycle (TCA), coupling the hydrolysis of succinyl-CoA to the synthesis of either ATP or GTP and thus represents the only step of substrate-level phosphorylation in the TCA. The beta subunit provides nucleotide specificity of the enzyme and binds the substrate succinate, while the binding sites for coenzyme A and phosphate are found in the alpha subunit.</text>
</comment>
<comment type="catalytic activity">
    <reaction evidence="1">
        <text>succinate + ATP + CoA = succinyl-CoA + ADP + phosphate</text>
        <dbReference type="Rhea" id="RHEA:17661"/>
        <dbReference type="ChEBI" id="CHEBI:30031"/>
        <dbReference type="ChEBI" id="CHEBI:30616"/>
        <dbReference type="ChEBI" id="CHEBI:43474"/>
        <dbReference type="ChEBI" id="CHEBI:57287"/>
        <dbReference type="ChEBI" id="CHEBI:57292"/>
        <dbReference type="ChEBI" id="CHEBI:456216"/>
        <dbReference type="EC" id="6.2.1.5"/>
    </reaction>
    <physiologicalReaction direction="right-to-left" evidence="1">
        <dbReference type="Rhea" id="RHEA:17663"/>
    </physiologicalReaction>
</comment>
<comment type="catalytic activity">
    <reaction evidence="1">
        <text>GTP + succinate + CoA = succinyl-CoA + GDP + phosphate</text>
        <dbReference type="Rhea" id="RHEA:22120"/>
        <dbReference type="ChEBI" id="CHEBI:30031"/>
        <dbReference type="ChEBI" id="CHEBI:37565"/>
        <dbReference type="ChEBI" id="CHEBI:43474"/>
        <dbReference type="ChEBI" id="CHEBI:57287"/>
        <dbReference type="ChEBI" id="CHEBI:57292"/>
        <dbReference type="ChEBI" id="CHEBI:58189"/>
    </reaction>
    <physiologicalReaction direction="right-to-left" evidence="1">
        <dbReference type="Rhea" id="RHEA:22122"/>
    </physiologicalReaction>
</comment>
<comment type="cofactor">
    <cofactor evidence="1">
        <name>Mg(2+)</name>
        <dbReference type="ChEBI" id="CHEBI:18420"/>
    </cofactor>
    <text evidence="1">Binds 1 Mg(2+) ion per subunit.</text>
</comment>
<comment type="pathway">
    <text evidence="1">Carbohydrate metabolism; tricarboxylic acid cycle; succinate from succinyl-CoA (ligase route): step 1/1.</text>
</comment>
<comment type="subunit">
    <text evidence="1">Heterotetramer of two alpha and two beta subunits.</text>
</comment>
<comment type="similarity">
    <text evidence="1">Belongs to the succinate/malate CoA ligase beta subunit family.</text>
</comment>
<evidence type="ECO:0000255" key="1">
    <source>
        <dbReference type="HAMAP-Rule" id="MF_00558"/>
    </source>
</evidence>